<proteinExistence type="inferred from homology"/>
<protein>
    <recommendedName>
        <fullName evidence="1">NAD kinase</fullName>
        <ecNumber evidence="1">2.7.1.23</ecNumber>
    </recommendedName>
    <alternativeName>
        <fullName evidence="1">ATP-dependent NAD kinase</fullName>
    </alternativeName>
</protein>
<evidence type="ECO:0000255" key="1">
    <source>
        <dbReference type="HAMAP-Rule" id="MF_00361"/>
    </source>
</evidence>
<dbReference type="EC" id="2.7.1.23" evidence="1"/>
<dbReference type="EMBL" id="CP000260">
    <property type="protein sequence ID" value="ABF34029.1"/>
    <property type="molecule type" value="Genomic_DNA"/>
</dbReference>
<dbReference type="SMR" id="Q1JGW5"/>
<dbReference type="KEGG" id="sph:MGAS10270_Spy0964"/>
<dbReference type="HOGENOM" id="CLU_008831_0_3_9"/>
<dbReference type="Proteomes" id="UP000002436">
    <property type="component" value="Chromosome"/>
</dbReference>
<dbReference type="GO" id="GO:0005737">
    <property type="term" value="C:cytoplasm"/>
    <property type="evidence" value="ECO:0007669"/>
    <property type="project" value="UniProtKB-SubCell"/>
</dbReference>
<dbReference type="GO" id="GO:0005524">
    <property type="term" value="F:ATP binding"/>
    <property type="evidence" value="ECO:0007669"/>
    <property type="project" value="UniProtKB-KW"/>
</dbReference>
<dbReference type="GO" id="GO:0046872">
    <property type="term" value="F:metal ion binding"/>
    <property type="evidence" value="ECO:0007669"/>
    <property type="project" value="UniProtKB-UniRule"/>
</dbReference>
<dbReference type="GO" id="GO:0051287">
    <property type="term" value="F:NAD binding"/>
    <property type="evidence" value="ECO:0007669"/>
    <property type="project" value="UniProtKB-ARBA"/>
</dbReference>
<dbReference type="GO" id="GO:0003951">
    <property type="term" value="F:NAD+ kinase activity"/>
    <property type="evidence" value="ECO:0007669"/>
    <property type="project" value="UniProtKB-UniRule"/>
</dbReference>
<dbReference type="GO" id="GO:0019674">
    <property type="term" value="P:NAD metabolic process"/>
    <property type="evidence" value="ECO:0007669"/>
    <property type="project" value="InterPro"/>
</dbReference>
<dbReference type="GO" id="GO:0006741">
    <property type="term" value="P:NADP biosynthetic process"/>
    <property type="evidence" value="ECO:0007669"/>
    <property type="project" value="UniProtKB-UniRule"/>
</dbReference>
<dbReference type="Gene3D" id="3.40.50.10330">
    <property type="entry name" value="Probable inorganic polyphosphate/atp-NAD kinase, domain 1"/>
    <property type="match status" value="1"/>
</dbReference>
<dbReference type="Gene3D" id="2.60.200.30">
    <property type="entry name" value="Probable inorganic polyphosphate/atp-NAD kinase, domain 2"/>
    <property type="match status" value="1"/>
</dbReference>
<dbReference type="HAMAP" id="MF_00361">
    <property type="entry name" value="NAD_kinase"/>
    <property type="match status" value="1"/>
</dbReference>
<dbReference type="InterPro" id="IPR017438">
    <property type="entry name" value="ATP-NAD_kinase_N"/>
</dbReference>
<dbReference type="InterPro" id="IPR017437">
    <property type="entry name" value="ATP-NAD_kinase_PpnK-typ_C"/>
</dbReference>
<dbReference type="InterPro" id="IPR016064">
    <property type="entry name" value="NAD/diacylglycerol_kinase_sf"/>
</dbReference>
<dbReference type="InterPro" id="IPR002504">
    <property type="entry name" value="NADK"/>
</dbReference>
<dbReference type="NCBIfam" id="NF003424">
    <property type="entry name" value="PRK04885.1"/>
    <property type="match status" value="1"/>
</dbReference>
<dbReference type="PANTHER" id="PTHR20275">
    <property type="entry name" value="NAD KINASE"/>
    <property type="match status" value="1"/>
</dbReference>
<dbReference type="PANTHER" id="PTHR20275:SF0">
    <property type="entry name" value="NAD KINASE"/>
    <property type="match status" value="1"/>
</dbReference>
<dbReference type="Pfam" id="PF01513">
    <property type="entry name" value="NAD_kinase"/>
    <property type="match status" value="1"/>
</dbReference>
<dbReference type="Pfam" id="PF20143">
    <property type="entry name" value="NAD_kinase_C"/>
    <property type="match status" value="1"/>
</dbReference>
<dbReference type="SUPFAM" id="SSF111331">
    <property type="entry name" value="NAD kinase/diacylglycerol kinase-like"/>
    <property type="match status" value="1"/>
</dbReference>
<keyword id="KW-0067">ATP-binding</keyword>
<keyword id="KW-0963">Cytoplasm</keyword>
<keyword id="KW-0418">Kinase</keyword>
<keyword id="KW-0520">NAD</keyword>
<keyword id="KW-0521">NADP</keyword>
<keyword id="KW-0547">Nucleotide-binding</keyword>
<keyword id="KW-0808">Transferase</keyword>
<comment type="function">
    <text evidence="1">Involved in the regulation of the intracellular balance of NAD and NADP, and is a key enzyme in the biosynthesis of NADP. Catalyzes specifically the phosphorylation on 2'-hydroxyl of the adenosine moiety of NAD to yield NADP.</text>
</comment>
<comment type="catalytic activity">
    <reaction evidence="1">
        <text>NAD(+) + ATP = ADP + NADP(+) + H(+)</text>
        <dbReference type="Rhea" id="RHEA:18629"/>
        <dbReference type="ChEBI" id="CHEBI:15378"/>
        <dbReference type="ChEBI" id="CHEBI:30616"/>
        <dbReference type="ChEBI" id="CHEBI:57540"/>
        <dbReference type="ChEBI" id="CHEBI:58349"/>
        <dbReference type="ChEBI" id="CHEBI:456216"/>
        <dbReference type="EC" id="2.7.1.23"/>
    </reaction>
</comment>
<comment type="cofactor">
    <cofactor evidence="1">
        <name>a divalent metal cation</name>
        <dbReference type="ChEBI" id="CHEBI:60240"/>
    </cofactor>
</comment>
<comment type="subcellular location">
    <subcellularLocation>
        <location evidence="1">Cytoplasm</location>
    </subcellularLocation>
</comment>
<comment type="similarity">
    <text evidence="1">Belongs to the NAD kinase family.</text>
</comment>
<name>NADK_STRPD</name>
<reference key="1">
    <citation type="journal article" date="2006" name="Proc. Natl. Acad. Sci. U.S.A.">
        <title>Molecular genetic anatomy of inter- and intraserotype variation in the human bacterial pathogen group A Streptococcus.</title>
        <authorList>
            <person name="Beres S.B."/>
            <person name="Richter E.W."/>
            <person name="Nagiec M.J."/>
            <person name="Sumby P."/>
            <person name="Porcella S.F."/>
            <person name="DeLeo F.R."/>
            <person name="Musser J.M."/>
        </authorList>
    </citation>
    <scope>NUCLEOTIDE SEQUENCE [LARGE SCALE GENOMIC DNA]</scope>
    <source>
        <strain>MGAS10270</strain>
    </source>
</reference>
<feature type="chain" id="PRO_1000005450" description="NAD kinase">
    <location>
        <begin position="1"/>
        <end position="279"/>
    </location>
</feature>
<feature type="active site" description="Proton acceptor" evidence="1">
    <location>
        <position position="57"/>
    </location>
</feature>
<feature type="binding site" evidence="1">
    <location>
        <begin position="57"/>
        <end position="58"/>
    </location>
    <ligand>
        <name>NAD(+)</name>
        <dbReference type="ChEBI" id="CHEBI:57540"/>
    </ligand>
</feature>
<feature type="binding site" evidence="1">
    <location>
        <begin position="133"/>
        <end position="134"/>
    </location>
    <ligand>
        <name>NAD(+)</name>
        <dbReference type="ChEBI" id="CHEBI:57540"/>
    </ligand>
</feature>
<feature type="binding site" evidence="1">
    <location>
        <position position="159"/>
    </location>
    <ligand>
        <name>NAD(+)</name>
        <dbReference type="ChEBI" id="CHEBI:57540"/>
    </ligand>
</feature>
<feature type="binding site" evidence="1">
    <location>
        <position position="161"/>
    </location>
    <ligand>
        <name>NAD(+)</name>
        <dbReference type="ChEBI" id="CHEBI:57540"/>
    </ligand>
</feature>
<feature type="binding site" evidence="1">
    <location>
        <begin position="172"/>
        <end position="177"/>
    </location>
    <ligand>
        <name>NAD(+)</name>
        <dbReference type="ChEBI" id="CHEBI:57540"/>
    </ligand>
</feature>
<gene>
    <name evidence="1" type="primary">nadK</name>
    <name type="ordered locus">MGAS10270_Spy0964</name>
</gene>
<sequence>MMTQMNYTGKVKRVAIIANGKYQSKRVASKLFSVFKDDPDFYLSKKNPDIVISIGGDGMLLSAFHMYEKELDKVRFVGIHTGHLGFYTDYRDFEVDKLIDNLRKDKGEQISYPILKVAITLDDGRVVKARALNEATVKRIEKTMVADVIINHVKFESFRGDGISVSTPTGSTAYNKSLGGAVLHPTIEALQLTEISSLNNRVFRTLGSSIIIPKKDKIELVPKRLGIYTISIDNKTYQLKNVTKVEYFIDDEKIHFVSSPSHTSFWERVKDAFIGEIDS</sequence>
<accession>Q1JGW5</accession>
<organism>
    <name type="scientific">Streptococcus pyogenes serotype M2 (strain MGAS10270)</name>
    <dbReference type="NCBI Taxonomy" id="370552"/>
    <lineage>
        <taxon>Bacteria</taxon>
        <taxon>Bacillati</taxon>
        <taxon>Bacillota</taxon>
        <taxon>Bacilli</taxon>
        <taxon>Lactobacillales</taxon>
        <taxon>Streptococcaceae</taxon>
        <taxon>Streptococcus</taxon>
    </lineage>
</organism>